<accession>P59700</accession>
<accession>Q6HU87</accession>
<accession>Q6KNH1</accession>
<name>AMIF_BACAN</name>
<dbReference type="EC" id="3.5.1.49" evidence="1"/>
<dbReference type="EMBL" id="AE016879">
    <property type="protein sequence ID" value="AAP27873.1"/>
    <property type="molecule type" value="Genomic_DNA"/>
</dbReference>
<dbReference type="EMBL" id="AE017334">
    <property type="protein sequence ID" value="AAT33271.1"/>
    <property type="molecule type" value="Genomic_DNA"/>
</dbReference>
<dbReference type="EMBL" id="AE017225">
    <property type="protein sequence ID" value="AAT56152.1"/>
    <property type="molecule type" value="Genomic_DNA"/>
</dbReference>
<dbReference type="RefSeq" id="NP_846387.1">
    <property type="nucleotide sequence ID" value="NC_003997.3"/>
</dbReference>
<dbReference type="RefSeq" id="WP_000535791.1">
    <property type="nucleotide sequence ID" value="NZ_WXXJ01000027.1"/>
</dbReference>
<dbReference type="RefSeq" id="YP_030101.1">
    <property type="nucleotide sequence ID" value="NC_005945.1"/>
</dbReference>
<dbReference type="SMR" id="P59700"/>
<dbReference type="STRING" id="261594.GBAA_4149"/>
<dbReference type="DNASU" id="1088883"/>
<dbReference type="GeneID" id="45023826"/>
<dbReference type="KEGG" id="ban:BA_4149"/>
<dbReference type="KEGG" id="banh:HYU01_20295"/>
<dbReference type="KEGG" id="bar:GBAA_4149"/>
<dbReference type="KEGG" id="bat:BAS3851"/>
<dbReference type="PATRIC" id="fig|198094.11.peg.4120"/>
<dbReference type="eggNOG" id="COG0388">
    <property type="taxonomic scope" value="Bacteria"/>
</dbReference>
<dbReference type="HOGENOM" id="CLU_071797_0_0_9"/>
<dbReference type="OMA" id="RIWGCFS"/>
<dbReference type="OrthoDB" id="9811121at2"/>
<dbReference type="Proteomes" id="UP000000427">
    <property type="component" value="Chromosome"/>
</dbReference>
<dbReference type="Proteomes" id="UP000000594">
    <property type="component" value="Chromosome"/>
</dbReference>
<dbReference type="GO" id="GO:0004328">
    <property type="term" value="F:formamidase activity"/>
    <property type="evidence" value="ECO:0007669"/>
    <property type="project" value="UniProtKB-UniRule"/>
</dbReference>
<dbReference type="GO" id="GO:0050126">
    <property type="term" value="F:N-carbamoylputrescine amidase activity"/>
    <property type="evidence" value="ECO:0007669"/>
    <property type="project" value="TreeGrafter"/>
</dbReference>
<dbReference type="GO" id="GO:0033388">
    <property type="term" value="P:putrescine biosynthetic process from arginine"/>
    <property type="evidence" value="ECO:0007669"/>
    <property type="project" value="TreeGrafter"/>
</dbReference>
<dbReference type="CDD" id="cd07565">
    <property type="entry name" value="aliphatic_amidase"/>
    <property type="match status" value="1"/>
</dbReference>
<dbReference type="Gene3D" id="3.60.110.10">
    <property type="entry name" value="Carbon-nitrogen hydrolase"/>
    <property type="match status" value="1"/>
</dbReference>
<dbReference type="HAMAP" id="MF_01243">
    <property type="entry name" value="Formamidase"/>
    <property type="match status" value="1"/>
</dbReference>
<dbReference type="InterPro" id="IPR050345">
    <property type="entry name" value="Aliph_Amidase/BUP"/>
</dbReference>
<dbReference type="InterPro" id="IPR003010">
    <property type="entry name" value="C-N_Hydrolase"/>
</dbReference>
<dbReference type="InterPro" id="IPR036526">
    <property type="entry name" value="C-N_Hydrolase_sf"/>
</dbReference>
<dbReference type="InterPro" id="IPR022843">
    <property type="entry name" value="Formamidase"/>
</dbReference>
<dbReference type="NCBIfam" id="NF009803">
    <property type="entry name" value="PRK13287.1"/>
    <property type="match status" value="1"/>
</dbReference>
<dbReference type="PANTHER" id="PTHR43674:SF15">
    <property type="entry name" value="FORMAMIDASE"/>
    <property type="match status" value="1"/>
</dbReference>
<dbReference type="PANTHER" id="PTHR43674">
    <property type="entry name" value="NITRILASE C965.09-RELATED"/>
    <property type="match status" value="1"/>
</dbReference>
<dbReference type="Pfam" id="PF00795">
    <property type="entry name" value="CN_hydrolase"/>
    <property type="match status" value="1"/>
</dbReference>
<dbReference type="SUPFAM" id="SSF56317">
    <property type="entry name" value="Carbon-nitrogen hydrolase"/>
    <property type="match status" value="1"/>
</dbReference>
<dbReference type="PROSITE" id="PS50263">
    <property type="entry name" value="CN_HYDROLASE"/>
    <property type="match status" value="1"/>
</dbReference>
<sequence length="332" mass="36808">MGSSGSMVKPISGFLTALIQYPVPVVESRADIDKQIKQIIKTIHSTKAGYPGLELIVFPEYSTQGLNTKKWTTEEFLCTVPGPETDLFAEACKESEVYGVFSIMERNPDGGEPYNTAIIIDPQGEMILKYRKLNPWVPVEPWKAGDLGLPVCDGPGGSKLAVCICHDGMFPEVAREAAYKGANVLIRISGYSTQVSEQWMLTNRSNAWQNLMYTLSVNLAGYDGVFYYFGEGQVCNFDGTTLVQGHRNPWEIVTAEVYPELADQARLGWGLENNIYNLGSRGYVATPGGVKENPYTFVKDLAEGKYKVPWEDEIKVKDGTIYGYPVKKTIHS</sequence>
<reference key="1">
    <citation type="journal article" date="2003" name="Nature">
        <title>The genome sequence of Bacillus anthracis Ames and comparison to closely related bacteria.</title>
        <authorList>
            <person name="Read T.D."/>
            <person name="Peterson S.N."/>
            <person name="Tourasse N.J."/>
            <person name="Baillie L.W."/>
            <person name="Paulsen I.T."/>
            <person name="Nelson K.E."/>
            <person name="Tettelin H."/>
            <person name="Fouts D.E."/>
            <person name="Eisen J.A."/>
            <person name="Gill S.R."/>
            <person name="Holtzapple E.K."/>
            <person name="Okstad O.A."/>
            <person name="Helgason E."/>
            <person name="Rilstone J."/>
            <person name="Wu M."/>
            <person name="Kolonay J.F."/>
            <person name="Beanan M.J."/>
            <person name="Dodson R.J."/>
            <person name="Brinkac L.M."/>
            <person name="Gwinn M.L."/>
            <person name="DeBoy R.T."/>
            <person name="Madpu R."/>
            <person name="Daugherty S.C."/>
            <person name="Durkin A.S."/>
            <person name="Haft D.H."/>
            <person name="Nelson W.C."/>
            <person name="Peterson J.D."/>
            <person name="Pop M."/>
            <person name="Khouri H.M."/>
            <person name="Radune D."/>
            <person name="Benton J.L."/>
            <person name="Mahamoud Y."/>
            <person name="Jiang L."/>
            <person name="Hance I.R."/>
            <person name="Weidman J.F."/>
            <person name="Berry K.J."/>
            <person name="Plaut R.D."/>
            <person name="Wolf A.M."/>
            <person name="Watkins K.L."/>
            <person name="Nierman W.C."/>
            <person name="Hazen A."/>
            <person name="Cline R.T."/>
            <person name="Redmond C."/>
            <person name="Thwaite J.E."/>
            <person name="White O."/>
            <person name="Salzberg S.L."/>
            <person name="Thomason B."/>
            <person name="Friedlander A.M."/>
            <person name="Koehler T.M."/>
            <person name="Hanna P.C."/>
            <person name="Kolstoe A.-B."/>
            <person name="Fraser C.M."/>
        </authorList>
    </citation>
    <scope>NUCLEOTIDE SEQUENCE [LARGE SCALE GENOMIC DNA]</scope>
    <source>
        <strain>Ames / isolate Porton</strain>
    </source>
</reference>
<reference key="2">
    <citation type="journal article" date="2009" name="J. Bacteriol.">
        <title>The complete genome sequence of Bacillus anthracis Ames 'Ancestor'.</title>
        <authorList>
            <person name="Ravel J."/>
            <person name="Jiang L."/>
            <person name="Stanley S.T."/>
            <person name="Wilson M.R."/>
            <person name="Decker R.S."/>
            <person name="Read T.D."/>
            <person name="Worsham P."/>
            <person name="Keim P.S."/>
            <person name="Salzberg S.L."/>
            <person name="Fraser-Liggett C.M."/>
            <person name="Rasko D.A."/>
        </authorList>
    </citation>
    <scope>NUCLEOTIDE SEQUENCE [LARGE SCALE GENOMIC DNA]</scope>
    <source>
        <strain>Ames ancestor</strain>
    </source>
</reference>
<reference key="3">
    <citation type="submission" date="2004-01" db="EMBL/GenBank/DDBJ databases">
        <title>Complete genome sequence of Bacillus anthracis Sterne.</title>
        <authorList>
            <person name="Brettin T.S."/>
            <person name="Bruce D."/>
            <person name="Challacombe J.F."/>
            <person name="Gilna P."/>
            <person name="Han C."/>
            <person name="Hill K."/>
            <person name="Hitchcock P."/>
            <person name="Jackson P."/>
            <person name="Keim P."/>
            <person name="Longmire J."/>
            <person name="Lucas S."/>
            <person name="Okinaka R."/>
            <person name="Richardson P."/>
            <person name="Rubin E."/>
            <person name="Tice H."/>
        </authorList>
    </citation>
    <scope>NUCLEOTIDE SEQUENCE [LARGE SCALE GENOMIC DNA]</scope>
    <source>
        <strain>Sterne</strain>
    </source>
</reference>
<gene>
    <name evidence="1" type="primary">amiF</name>
    <name type="ordered locus">BA_4149</name>
    <name type="ordered locus">GBAA_4149</name>
    <name type="ordered locus">BAS3851</name>
</gene>
<comment type="function">
    <text evidence="1">Is an aliphatic amidase with a restricted substrate specificity, as it only hydrolyzes formamide.</text>
</comment>
<comment type="catalytic activity">
    <reaction evidence="1">
        <text>formamide + H2O = formate + NH4(+)</text>
        <dbReference type="Rhea" id="RHEA:21948"/>
        <dbReference type="ChEBI" id="CHEBI:15377"/>
        <dbReference type="ChEBI" id="CHEBI:15740"/>
        <dbReference type="ChEBI" id="CHEBI:16397"/>
        <dbReference type="ChEBI" id="CHEBI:28938"/>
        <dbReference type="EC" id="3.5.1.49"/>
    </reaction>
</comment>
<comment type="similarity">
    <text evidence="1">Belongs to the carbon-nitrogen hydrolase superfamily. Aliphatic amidase family.</text>
</comment>
<organism>
    <name type="scientific">Bacillus anthracis</name>
    <dbReference type="NCBI Taxonomy" id="1392"/>
    <lineage>
        <taxon>Bacteria</taxon>
        <taxon>Bacillati</taxon>
        <taxon>Bacillota</taxon>
        <taxon>Bacilli</taxon>
        <taxon>Bacillales</taxon>
        <taxon>Bacillaceae</taxon>
        <taxon>Bacillus</taxon>
        <taxon>Bacillus cereus group</taxon>
    </lineage>
</organism>
<feature type="chain" id="PRO_0000204062" description="Formamidase">
    <location>
        <begin position="1"/>
        <end position="332"/>
    </location>
</feature>
<feature type="domain" description="CN hydrolase" evidence="2">
    <location>
        <begin position="14"/>
        <end position="259"/>
    </location>
</feature>
<feature type="active site" description="Proton acceptor" evidence="1">
    <location>
        <position position="60"/>
    </location>
</feature>
<feature type="active site" description="Proton donor" evidence="1">
    <location>
        <position position="132"/>
    </location>
</feature>
<feature type="active site" description="Nucleophile" evidence="1">
    <location>
        <position position="165"/>
    </location>
</feature>
<evidence type="ECO:0000255" key="1">
    <source>
        <dbReference type="HAMAP-Rule" id="MF_01243"/>
    </source>
</evidence>
<evidence type="ECO:0000255" key="2">
    <source>
        <dbReference type="PROSITE-ProRule" id="PRU00054"/>
    </source>
</evidence>
<protein>
    <recommendedName>
        <fullName evidence="1">Formamidase</fullName>
        <ecNumber evidence="1">3.5.1.49</ecNumber>
    </recommendedName>
    <alternativeName>
        <fullName evidence="1">Formamide amidohydrolase</fullName>
    </alternativeName>
</protein>
<proteinExistence type="inferred from homology"/>
<keyword id="KW-0378">Hydrolase</keyword>
<keyword id="KW-1185">Reference proteome</keyword>